<proteinExistence type="inferred from homology"/>
<keyword id="KW-0963">Cytoplasm</keyword>
<keyword id="KW-0671">Queuosine biosynthesis</keyword>
<keyword id="KW-0949">S-adenosyl-L-methionine</keyword>
<keyword id="KW-0808">Transferase</keyword>
<gene>
    <name evidence="1" type="primary">queA</name>
    <name type="ordered locus">XC_1735</name>
</gene>
<organism>
    <name type="scientific">Xanthomonas campestris pv. campestris (strain 8004)</name>
    <dbReference type="NCBI Taxonomy" id="314565"/>
    <lineage>
        <taxon>Bacteria</taxon>
        <taxon>Pseudomonadati</taxon>
        <taxon>Pseudomonadota</taxon>
        <taxon>Gammaproteobacteria</taxon>
        <taxon>Lysobacterales</taxon>
        <taxon>Lysobacteraceae</taxon>
        <taxon>Xanthomonas</taxon>
    </lineage>
</organism>
<accession>Q4UVX3</accession>
<protein>
    <recommendedName>
        <fullName evidence="1">S-adenosylmethionine:tRNA ribosyltransferase-isomerase</fullName>
        <ecNumber evidence="1">2.4.99.17</ecNumber>
    </recommendedName>
    <alternativeName>
        <fullName evidence="1">Queuosine biosynthesis protein QueA</fullName>
    </alternativeName>
</protein>
<name>QUEA_XANC8</name>
<reference key="1">
    <citation type="journal article" date="2005" name="Genome Res.">
        <title>Comparative and functional genomic analyses of the pathogenicity of phytopathogen Xanthomonas campestris pv. campestris.</title>
        <authorList>
            <person name="Qian W."/>
            <person name="Jia Y."/>
            <person name="Ren S.-X."/>
            <person name="He Y.-Q."/>
            <person name="Feng J.-X."/>
            <person name="Lu L.-F."/>
            <person name="Sun Q."/>
            <person name="Ying G."/>
            <person name="Tang D.-J."/>
            <person name="Tang H."/>
            <person name="Wu W."/>
            <person name="Hao P."/>
            <person name="Wang L."/>
            <person name="Jiang B.-L."/>
            <person name="Zeng S."/>
            <person name="Gu W.-Y."/>
            <person name="Lu G."/>
            <person name="Rong L."/>
            <person name="Tian Y."/>
            <person name="Yao Z."/>
            <person name="Fu G."/>
            <person name="Chen B."/>
            <person name="Fang R."/>
            <person name="Qiang B."/>
            <person name="Chen Z."/>
            <person name="Zhao G.-P."/>
            <person name="Tang J.-L."/>
            <person name="He C."/>
        </authorList>
    </citation>
    <scope>NUCLEOTIDE SEQUENCE [LARGE SCALE GENOMIC DNA]</scope>
    <source>
        <strain>8004</strain>
    </source>
</reference>
<feature type="chain" id="PRO_0000231391" description="S-adenosylmethionine:tRNA ribosyltransferase-isomerase">
    <location>
        <begin position="1"/>
        <end position="356"/>
    </location>
</feature>
<dbReference type="EC" id="2.4.99.17" evidence="1"/>
<dbReference type="EMBL" id="CP000050">
    <property type="protein sequence ID" value="AAY48800.1"/>
    <property type="molecule type" value="Genomic_DNA"/>
</dbReference>
<dbReference type="RefSeq" id="WP_011037521.1">
    <property type="nucleotide sequence ID" value="NZ_CP155948.1"/>
</dbReference>
<dbReference type="SMR" id="Q4UVX3"/>
<dbReference type="KEGG" id="xcb:XC_1735"/>
<dbReference type="HOGENOM" id="CLU_039110_1_0_6"/>
<dbReference type="UniPathway" id="UPA00392"/>
<dbReference type="Proteomes" id="UP000000420">
    <property type="component" value="Chromosome"/>
</dbReference>
<dbReference type="GO" id="GO:0005737">
    <property type="term" value="C:cytoplasm"/>
    <property type="evidence" value="ECO:0007669"/>
    <property type="project" value="UniProtKB-SubCell"/>
</dbReference>
<dbReference type="GO" id="GO:0051075">
    <property type="term" value="F:S-adenosylmethionine:tRNA ribosyltransferase-isomerase activity"/>
    <property type="evidence" value="ECO:0007669"/>
    <property type="project" value="UniProtKB-EC"/>
</dbReference>
<dbReference type="GO" id="GO:0008616">
    <property type="term" value="P:queuosine biosynthetic process"/>
    <property type="evidence" value="ECO:0007669"/>
    <property type="project" value="UniProtKB-UniRule"/>
</dbReference>
<dbReference type="GO" id="GO:0002099">
    <property type="term" value="P:tRNA wobble guanine modification"/>
    <property type="evidence" value="ECO:0007669"/>
    <property type="project" value="TreeGrafter"/>
</dbReference>
<dbReference type="FunFam" id="2.40.10.240:FF:000003">
    <property type="entry name" value="S-adenosylmethionine:tRNA ribosyltransferase-isomerase"/>
    <property type="match status" value="1"/>
</dbReference>
<dbReference type="FunFam" id="3.40.1780.10:FF:000001">
    <property type="entry name" value="S-adenosylmethionine:tRNA ribosyltransferase-isomerase"/>
    <property type="match status" value="1"/>
</dbReference>
<dbReference type="Gene3D" id="2.40.10.240">
    <property type="entry name" value="QueA-like"/>
    <property type="match status" value="1"/>
</dbReference>
<dbReference type="Gene3D" id="3.40.1780.10">
    <property type="entry name" value="QueA-like"/>
    <property type="match status" value="1"/>
</dbReference>
<dbReference type="HAMAP" id="MF_00113">
    <property type="entry name" value="QueA"/>
    <property type="match status" value="1"/>
</dbReference>
<dbReference type="InterPro" id="IPR003699">
    <property type="entry name" value="QueA"/>
</dbReference>
<dbReference type="InterPro" id="IPR042118">
    <property type="entry name" value="QueA_dom1"/>
</dbReference>
<dbReference type="InterPro" id="IPR042119">
    <property type="entry name" value="QueA_dom2"/>
</dbReference>
<dbReference type="InterPro" id="IPR036100">
    <property type="entry name" value="QueA_sf"/>
</dbReference>
<dbReference type="NCBIfam" id="NF001140">
    <property type="entry name" value="PRK00147.1"/>
    <property type="match status" value="1"/>
</dbReference>
<dbReference type="NCBIfam" id="TIGR00113">
    <property type="entry name" value="queA"/>
    <property type="match status" value="1"/>
</dbReference>
<dbReference type="PANTHER" id="PTHR30307">
    <property type="entry name" value="S-ADENOSYLMETHIONINE:TRNA RIBOSYLTRANSFERASE-ISOMERASE"/>
    <property type="match status" value="1"/>
</dbReference>
<dbReference type="PANTHER" id="PTHR30307:SF0">
    <property type="entry name" value="S-ADENOSYLMETHIONINE:TRNA RIBOSYLTRANSFERASE-ISOMERASE"/>
    <property type="match status" value="1"/>
</dbReference>
<dbReference type="Pfam" id="PF02547">
    <property type="entry name" value="Queuosine_synth"/>
    <property type="match status" value="1"/>
</dbReference>
<dbReference type="SUPFAM" id="SSF111337">
    <property type="entry name" value="QueA-like"/>
    <property type="match status" value="1"/>
</dbReference>
<sequence>MKKSDFHYDLPEELIAQAPLAERAASRLLVVPPTPAAFSDRQVRDLPELLQPGDLLIFNDTRVIPARLFGQKASGGRVEILIERLLGGQQARAQIGASKSPKAGSVIALDAGGQAEVLGRDGEFYLLRFDIPAPLEHWLLDAGRLPLPPYIRREPGLDDRERYQTVFAREVGAVAAPTAGLHFDEALLARLRERGVEFGHVTLHVGAGTFQPVRVDALDKHVMHTEWLNVGAALVEQVRRTRARGGRVIAVGTTVVRSLESAWRKTDDAPHGELQSFAGETQIFILPGYRIRSVDAMVTNFHLPESTLLMMVSAFAGCDRIFAAYAHAIAQRYRFFSYGDAMLLWSREWGIGNGES</sequence>
<comment type="function">
    <text evidence="1">Transfers and isomerizes the ribose moiety from AdoMet to the 7-aminomethyl group of 7-deazaguanine (preQ1-tRNA) to give epoxyqueuosine (oQ-tRNA).</text>
</comment>
<comment type="catalytic activity">
    <reaction evidence="1">
        <text>7-aminomethyl-7-carbaguanosine(34) in tRNA + S-adenosyl-L-methionine = epoxyqueuosine(34) in tRNA + adenine + L-methionine + 2 H(+)</text>
        <dbReference type="Rhea" id="RHEA:32155"/>
        <dbReference type="Rhea" id="RHEA-COMP:10342"/>
        <dbReference type="Rhea" id="RHEA-COMP:18582"/>
        <dbReference type="ChEBI" id="CHEBI:15378"/>
        <dbReference type="ChEBI" id="CHEBI:16708"/>
        <dbReference type="ChEBI" id="CHEBI:57844"/>
        <dbReference type="ChEBI" id="CHEBI:59789"/>
        <dbReference type="ChEBI" id="CHEBI:82833"/>
        <dbReference type="ChEBI" id="CHEBI:194443"/>
        <dbReference type="EC" id="2.4.99.17"/>
    </reaction>
</comment>
<comment type="pathway">
    <text evidence="1">tRNA modification; tRNA-queuosine biosynthesis.</text>
</comment>
<comment type="subunit">
    <text evidence="1">Monomer.</text>
</comment>
<comment type="subcellular location">
    <subcellularLocation>
        <location evidence="1">Cytoplasm</location>
    </subcellularLocation>
</comment>
<comment type="similarity">
    <text evidence="1">Belongs to the QueA family.</text>
</comment>
<evidence type="ECO:0000255" key="1">
    <source>
        <dbReference type="HAMAP-Rule" id="MF_00113"/>
    </source>
</evidence>